<feature type="chain" id="PRO_0000046893" description="Suppressor of presenilin protein 4">
    <location>
        <begin position="1"/>
        <end position="1311"/>
    </location>
</feature>
<feature type="zinc finger region" description="C2H2-type 1" evidence="1">
    <location>
        <begin position="112"/>
        <end position="134"/>
    </location>
</feature>
<feature type="zinc finger region" description="C2H2-type 2" evidence="1">
    <location>
        <begin position="141"/>
        <end position="163"/>
    </location>
</feature>
<feature type="zinc finger region" description="C2H2-type 3" evidence="1">
    <location>
        <begin position="327"/>
        <end position="349"/>
    </location>
</feature>
<feature type="zinc finger region" description="C2H2-type 4" evidence="1">
    <location>
        <begin position="355"/>
        <end position="379"/>
    </location>
</feature>
<feature type="zinc finger region" description="C2H2-type 5" evidence="1">
    <location>
        <begin position="451"/>
        <end position="476"/>
    </location>
</feature>
<feature type="zinc finger region" description="C2H2-type 6" evidence="1">
    <location>
        <begin position="487"/>
        <end position="510"/>
    </location>
</feature>
<feature type="zinc finger region" description="C2H2-type 7" evidence="1">
    <location>
        <begin position="585"/>
        <end position="607"/>
    </location>
</feature>
<feature type="zinc finger region" description="C2H2-type 8" evidence="1">
    <location>
        <begin position="613"/>
        <end position="635"/>
    </location>
</feature>
<feature type="zinc finger region" description="C2H2-type 9" evidence="1">
    <location>
        <begin position="709"/>
        <end position="731"/>
    </location>
</feature>
<feature type="zinc finger region" description="C2H2-type 10" evidence="1">
    <location>
        <begin position="737"/>
        <end position="759"/>
    </location>
</feature>
<feature type="zinc finger region" description="C2H2-type 11" evidence="1">
    <location>
        <begin position="794"/>
        <end position="816"/>
    </location>
</feature>
<feature type="zinc finger region" description="C2H2-type 12" evidence="1">
    <location>
        <begin position="823"/>
        <end position="845"/>
    </location>
</feature>
<feature type="zinc finger region" description="C2H2-type 13" evidence="1">
    <location>
        <begin position="1022"/>
        <end position="1044"/>
    </location>
</feature>
<feature type="zinc finger region" description="C2H2-type 14" evidence="1">
    <location>
        <begin position="1053"/>
        <end position="1075"/>
    </location>
</feature>
<feature type="zinc finger region" description="C2H2-type 15" evidence="1">
    <location>
        <begin position="1104"/>
        <end position="1126"/>
    </location>
</feature>
<feature type="zinc finger region" description="C2H2-type 16" evidence="1">
    <location>
        <begin position="1162"/>
        <end position="1184"/>
    </location>
</feature>
<feature type="zinc finger region" description="C2H2-type 17" evidence="1">
    <location>
        <begin position="1190"/>
        <end position="1212"/>
    </location>
</feature>
<feature type="zinc finger region" description="C2H2-type 18" evidence="1">
    <location>
        <begin position="1261"/>
        <end position="1284"/>
    </location>
</feature>
<feature type="region of interest" description="Disordered" evidence="2">
    <location>
        <begin position="1"/>
        <end position="58"/>
    </location>
</feature>
<feature type="region of interest" description="Disordered" evidence="2">
    <location>
        <begin position="75"/>
        <end position="95"/>
    </location>
</feature>
<feature type="region of interest" description="Disordered" evidence="2">
    <location>
        <begin position="226"/>
        <end position="304"/>
    </location>
</feature>
<feature type="region of interest" description="Disordered" evidence="2">
    <location>
        <begin position="544"/>
        <end position="563"/>
    </location>
</feature>
<feature type="region of interest" description="Disordered" evidence="2">
    <location>
        <begin position="865"/>
        <end position="1002"/>
    </location>
</feature>
<feature type="compositionally biased region" description="Polar residues" evidence="2">
    <location>
        <begin position="1"/>
        <end position="11"/>
    </location>
</feature>
<feature type="compositionally biased region" description="Low complexity" evidence="2">
    <location>
        <begin position="280"/>
        <end position="293"/>
    </location>
</feature>
<feature type="compositionally biased region" description="Acidic residues" evidence="2">
    <location>
        <begin position="552"/>
        <end position="561"/>
    </location>
</feature>
<feature type="compositionally biased region" description="Basic and acidic residues" evidence="2">
    <location>
        <begin position="874"/>
        <end position="897"/>
    </location>
</feature>
<feature type="compositionally biased region" description="Acidic residues" evidence="2">
    <location>
        <begin position="898"/>
        <end position="907"/>
    </location>
</feature>
<feature type="compositionally biased region" description="Basic and acidic residues" evidence="2">
    <location>
        <begin position="908"/>
        <end position="920"/>
    </location>
</feature>
<feature type="compositionally biased region" description="Polar residues" evidence="2">
    <location>
        <begin position="956"/>
        <end position="979"/>
    </location>
</feature>
<feature type="splice variant" id="VSP_008060" description="In isoform b." evidence="5">
    <location>
        <begin position="1241"/>
        <end position="1242"/>
    </location>
</feature>
<feature type="mutagenesis site" description="In by105; increased expression of presenilin hop-1. Increased ROS levels and reduced survival upon paraquat treatment to induce oxidative stress." evidence="4">
    <location>
        <begin position="683"/>
        <end position="1311"/>
    </location>
</feature>
<protein>
    <recommendedName>
        <fullName>Suppressor of presenilin protein 4</fullName>
    </recommendedName>
</protein>
<gene>
    <name type="primary">spr-4</name>
    <name type="ORF">C09H6.1</name>
</gene>
<keyword id="KW-0025">Alternative splicing</keyword>
<keyword id="KW-0238">DNA-binding</keyword>
<keyword id="KW-0479">Metal-binding</keyword>
<keyword id="KW-0539">Nucleus</keyword>
<keyword id="KW-1185">Reference proteome</keyword>
<keyword id="KW-0677">Repeat</keyword>
<keyword id="KW-0678">Repressor</keyword>
<keyword id="KW-0804">Transcription</keyword>
<keyword id="KW-0805">Transcription regulation</keyword>
<keyword id="KW-0862">Zinc</keyword>
<keyword id="KW-0863">Zinc-finger</keyword>
<reference key="1">
    <citation type="journal article" date="2003" name="Development">
        <title>Two suppressors of sel-12 encode C2H2 zinc-finger proteins that regulate presenilin transcription in Caenorhabditis elegans.</title>
        <authorList>
            <person name="Lakowski B."/>
            <person name="Eimer S."/>
            <person name="Goebel C."/>
            <person name="Boettcher A."/>
            <person name="Wagler B."/>
            <person name="Baumeister R."/>
        </authorList>
    </citation>
    <scope>NUCLEOTIDE SEQUENCE [GENOMIC DNA] (ISOFORM B)</scope>
    <scope>FUNCTION</scope>
</reference>
<reference key="2">
    <citation type="journal article" date="1998" name="Science">
        <title>Genome sequence of the nematode C. elegans: a platform for investigating biology.</title>
        <authorList>
            <consortium name="The C. elegans sequencing consortium"/>
        </authorList>
    </citation>
    <scope>NUCLEOTIDE SEQUENCE [LARGE SCALE GENOMIC DNA]</scope>
    <scope>ALTERNATIVE SPLICING</scope>
    <source>
        <strain>Bristol N2</strain>
    </source>
</reference>
<reference key="3">
    <citation type="journal article" date="2014" name="Nature">
        <title>REST and stress resistance in ageing and Alzheimer's disease.</title>
        <authorList>
            <person name="Lu T."/>
            <person name="Aron L."/>
            <person name="Zullo J."/>
            <person name="Pan Y."/>
            <person name="Kim H."/>
            <person name="Chen Y."/>
            <person name="Yang T.H."/>
            <person name="Kim H.M."/>
            <person name="Drake D."/>
            <person name="Liu X.S."/>
            <person name="Bennett D.A."/>
            <person name="Colaiacovo M.P."/>
            <person name="Yankner B.A."/>
        </authorList>
    </citation>
    <scope>FUNCTION</scope>
    <scope>TISSUE SPECIFICITY</scope>
    <scope>INDUCTION BY OXIDATIVE STRESS</scope>
    <scope>DISRUPTION PHENOTYPE</scope>
    <scope>MUTAGENESIS OF 683-TRP--VAL-1311</scope>
</reference>
<dbReference type="EMBL" id="Z81466">
    <property type="protein sequence ID" value="CAB03868.2"/>
    <property type="molecule type" value="Genomic_DNA"/>
</dbReference>
<dbReference type="EMBL" id="Z81466">
    <property type="protein sequence ID" value="CAE45043.1"/>
    <property type="molecule type" value="Genomic_DNA"/>
</dbReference>
<dbReference type="PIR" id="T19170">
    <property type="entry name" value="T19170"/>
</dbReference>
<dbReference type="RefSeq" id="NP_001020993.1">
    <molecule id="O17582-1"/>
    <property type="nucleotide sequence ID" value="NM_001025822.4"/>
</dbReference>
<dbReference type="RefSeq" id="NP_001020994.1">
    <molecule id="O17582-2"/>
    <property type="nucleotide sequence ID" value="NM_001025823.6"/>
</dbReference>
<dbReference type="BioGRID" id="38030">
    <property type="interactions" value="1"/>
</dbReference>
<dbReference type="FunCoup" id="O17582">
    <property type="interactions" value="40"/>
</dbReference>
<dbReference type="STRING" id="6239.C09H6.1a.1"/>
<dbReference type="PaxDb" id="6239-C09H6.1a"/>
<dbReference type="PeptideAtlas" id="O17582"/>
<dbReference type="EnsemblMetazoa" id="C09H6.1a.1">
    <molecule id="O17582-1"/>
    <property type="protein sequence ID" value="C09H6.1a.1"/>
    <property type="gene ID" value="WBGene00005009"/>
</dbReference>
<dbReference type="EnsemblMetazoa" id="C09H6.1b.1">
    <molecule id="O17582-2"/>
    <property type="protein sequence ID" value="C09H6.1b.1"/>
    <property type="gene ID" value="WBGene00005009"/>
</dbReference>
<dbReference type="GeneID" id="172596"/>
<dbReference type="KEGG" id="cel:CELE_C09H6.1"/>
<dbReference type="UCSC" id="C09H6.1b">
    <molecule id="O17582-1"/>
    <property type="organism name" value="c. elegans"/>
</dbReference>
<dbReference type="AGR" id="WB:WBGene00005009"/>
<dbReference type="CTD" id="172596"/>
<dbReference type="WormBase" id="C09H6.1a">
    <molecule id="O17582-1"/>
    <property type="protein sequence ID" value="CE30487"/>
    <property type="gene ID" value="WBGene00005009"/>
    <property type="gene designation" value="spr-4"/>
</dbReference>
<dbReference type="WormBase" id="C09H6.1b">
    <molecule id="O17582-2"/>
    <property type="protein sequence ID" value="CE15609"/>
    <property type="gene ID" value="WBGene00005009"/>
    <property type="gene designation" value="spr-4"/>
</dbReference>
<dbReference type="eggNOG" id="KOG1721">
    <property type="taxonomic scope" value="Eukaryota"/>
</dbReference>
<dbReference type="GeneTree" id="ENSGT00940000156658"/>
<dbReference type="InParanoid" id="O17582"/>
<dbReference type="OMA" id="EKCSECP"/>
<dbReference type="OrthoDB" id="5815677at2759"/>
<dbReference type="PhylomeDB" id="O17582"/>
<dbReference type="SignaLink" id="O17582"/>
<dbReference type="PRO" id="PR:O17582"/>
<dbReference type="Proteomes" id="UP000001940">
    <property type="component" value="Chromosome I"/>
</dbReference>
<dbReference type="Bgee" id="WBGene00005009">
    <property type="expression patterns" value="Expressed in embryo and 4 other cell types or tissues"/>
</dbReference>
<dbReference type="GO" id="GO:0005634">
    <property type="term" value="C:nucleus"/>
    <property type="evidence" value="ECO:0007669"/>
    <property type="project" value="UniProtKB-SubCell"/>
</dbReference>
<dbReference type="GO" id="GO:0003677">
    <property type="term" value="F:DNA binding"/>
    <property type="evidence" value="ECO:0007669"/>
    <property type="project" value="UniProtKB-KW"/>
</dbReference>
<dbReference type="GO" id="GO:0000981">
    <property type="term" value="F:DNA-binding transcription factor activity, RNA polymerase II-specific"/>
    <property type="evidence" value="ECO:0000318"/>
    <property type="project" value="GO_Central"/>
</dbReference>
<dbReference type="GO" id="GO:0008270">
    <property type="term" value="F:zinc ion binding"/>
    <property type="evidence" value="ECO:0007669"/>
    <property type="project" value="UniProtKB-KW"/>
</dbReference>
<dbReference type="GO" id="GO:0006357">
    <property type="term" value="P:regulation of transcription by RNA polymerase II"/>
    <property type="evidence" value="ECO:0000315"/>
    <property type="project" value="UniProtKB"/>
</dbReference>
<dbReference type="FunFam" id="3.30.160.60:FF:004826">
    <property type="match status" value="1"/>
</dbReference>
<dbReference type="FunFam" id="3.30.160.60:FF:004832">
    <property type="match status" value="1"/>
</dbReference>
<dbReference type="Gene3D" id="3.30.160.60">
    <property type="entry name" value="Classic Zinc Finger"/>
    <property type="match status" value="6"/>
</dbReference>
<dbReference type="InterPro" id="IPR050688">
    <property type="entry name" value="Zinc_finger/UBP_domain"/>
</dbReference>
<dbReference type="InterPro" id="IPR036236">
    <property type="entry name" value="Znf_C2H2_sf"/>
</dbReference>
<dbReference type="InterPro" id="IPR013087">
    <property type="entry name" value="Znf_C2H2_type"/>
</dbReference>
<dbReference type="PANTHER" id="PTHR24403:SF67">
    <property type="entry name" value="FI01116P-RELATED"/>
    <property type="match status" value="1"/>
</dbReference>
<dbReference type="PANTHER" id="PTHR24403">
    <property type="entry name" value="ZINC FINGER PROTEIN"/>
    <property type="match status" value="1"/>
</dbReference>
<dbReference type="SMART" id="SM00355">
    <property type="entry name" value="ZnF_C2H2"/>
    <property type="match status" value="18"/>
</dbReference>
<dbReference type="SUPFAM" id="SSF57667">
    <property type="entry name" value="beta-beta-alpha zinc fingers"/>
    <property type="match status" value="2"/>
</dbReference>
<dbReference type="PROSITE" id="PS00028">
    <property type="entry name" value="ZINC_FINGER_C2H2_1"/>
    <property type="match status" value="4"/>
</dbReference>
<dbReference type="PROSITE" id="PS50157">
    <property type="entry name" value="ZINC_FINGER_C2H2_2"/>
    <property type="match status" value="1"/>
</dbReference>
<name>SPR4_CAEEL</name>
<comment type="function">
    <text evidence="3 4">Probable transcriptional regulator, which participates in the transcriptional repression of the presenilin protein hop-1 (PubMed:12668626, PubMed:24670762). Might play a role in the oxidative stress response (PubMed:24670762).</text>
</comment>
<comment type="subcellular location">
    <subcellularLocation>
        <location evidence="5">Nucleus</location>
    </subcellularLocation>
</comment>
<comment type="alternative products">
    <event type="alternative splicing"/>
    <isoform>
        <id>O17582-1</id>
        <name>a</name>
        <sequence type="displayed"/>
    </isoform>
    <isoform>
        <id>O17582-2</id>
        <name>b</name>
        <sequence type="described" ref="VSP_008060"/>
    </isoform>
</comment>
<comment type="tissue specificity">
    <text evidence="4">Expressed in neurons.</text>
</comment>
<comment type="induction">
    <text evidence="4">Up-regulated by oxidative stress.</text>
</comment>
<comment type="disruption phenotype">
    <text evidence="4">RNAi-mediated knockdown results in reduced survival upon paraquat treatment to induce oxidative stress.</text>
</comment>
<comment type="miscellaneous">
    <text>Loss of function results in a suppression of sel-12 phenotypes, possibly by up-regulating hop-1 expression.</text>
</comment>
<sequence>MSSEPTSSIESDNLRRSKRKKFKLDFVAAAHGNNQKKSRKDPHGQGDDDDDTFDDDLNHFEPLSVLTEQDVSMEMFEDDEEDTVSRRRTRRSTAHFQDYQEPDRWIENSGPHACHKCPSRYESKSSLANHTKMHLGEKRKFACELCDFSASTLKSLTHHNNIHQNFGVLSQQTSPVIPVASSADSTLNSSINSTGCQINAPPAPKLDEEAPIAVESVVVHHEDVAEFDTTPPPILEREDDGPPVLIREAPVRKSNRPMKPTQKAQKMTKQRERKSKTVESPKGSLPSSSASSVTPPPVRKDVEKPKIFVKTTKKNLKKTMKITKVRQRCPHCPFTTSTVTRLNRHSGGHKLKEGYICPSENCNFMCRKAGFLQKHYILHKGTLPWPPEYVKKGGAKMKRTFPESEEKKIEVTEKVQKMKKMHKRRANTVQVVAKAQLKSYIKVEVDDVIFKKCNIGECEFLTQTLTQLIVHKVKTHDTKTAFPQHRFLCLTCGHRAKSYAALRTHKLIEHTSTHKRFHRTYYLKECVGDKFFVKYNLSKVQEEVKEEPKEADGDESGDESFDSMCPASDVHPETLAAIEMKDVFFCCNMCPYKAPTMNRCQRHYDKHFKNDEFKCQYCSWSSRSKEVIVNHEKLHPTVVVANTNEAPVVKNEIEAKVEVLSKTVSSPVECTEESSLSKSIQLWCQREKLRHPELDEQFTRKMIDGVKGFQCTDCPYTSKYRGDMRSHKKRHDIEQLYRCVQCTYTTNRPVSLKDHLKQHAIVNMSIADIKSRRVVVNQGVKIGMRRGVGKDKIYCCDKCPYVTLALGCLWRHHRNHRDTAKINICSNCSYSSIDQRKMEEHTIIHLGLGLNEAVPFVKRVDQKGRPVSSLTDLNSEKMNERKSTKRKMLDKVEKMEVGEDEEDDEESVDKGTDDGDYKQRPEKKRKQSSEEPASDPELFGSSSQPTRQLSERATRNRINYSLLSKNGSGKPTPSTSSANLEKLAGSSGGASSESPEPDESVEVSHWKIRTFLRSEYGVKESLKCPDCPYKSSEPDVLEKHRYYHMTKTTPRPYACSDCTFNTYTPTALLQHLKLHSEGVYFDPMVKKHMKHRKGDSIPPGVKGYYCKNCSFKTSIHRNFIEHSAYHRQQLINRINITLKRQPPRIEYQRPKLKHQFVAKNAKYCKKCTFKCVSQSNFIEHLDRHGWNQLYKCYSCDYSDNTKSVVDFHQLNHHIVKDQTLHSICQSAKFRLENGVIQIPEFQTEKSKPTPDEFVSKTRGLLKCPSCEYFCHVSSELAFHMSVHHLTEPNARETISYLHMGLVPPKATVTTV</sequence>
<organism>
    <name type="scientific">Caenorhabditis elegans</name>
    <dbReference type="NCBI Taxonomy" id="6239"/>
    <lineage>
        <taxon>Eukaryota</taxon>
        <taxon>Metazoa</taxon>
        <taxon>Ecdysozoa</taxon>
        <taxon>Nematoda</taxon>
        <taxon>Chromadorea</taxon>
        <taxon>Rhabditida</taxon>
        <taxon>Rhabditina</taxon>
        <taxon>Rhabditomorpha</taxon>
        <taxon>Rhabditoidea</taxon>
        <taxon>Rhabditidae</taxon>
        <taxon>Peloderinae</taxon>
        <taxon>Caenorhabditis</taxon>
    </lineage>
</organism>
<proteinExistence type="evidence at protein level"/>
<accession>O17582</accession>
<evidence type="ECO:0000255" key="1">
    <source>
        <dbReference type="PROSITE-ProRule" id="PRU00042"/>
    </source>
</evidence>
<evidence type="ECO:0000256" key="2">
    <source>
        <dbReference type="SAM" id="MobiDB-lite"/>
    </source>
</evidence>
<evidence type="ECO:0000269" key="3">
    <source>
    </source>
</evidence>
<evidence type="ECO:0000269" key="4">
    <source>
    </source>
</evidence>
<evidence type="ECO:0000305" key="5"/>